<feature type="chain" id="PRO_1000141177" description="Nitric oxide reductase FlRd-NAD(+) reductase">
    <location>
        <begin position="1"/>
        <end position="377"/>
    </location>
</feature>
<protein>
    <recommendedName>
        <fullName evidence="1">Nitric oxide reductase FlRd-NAD(+) reductase</fullName>
        <ecNumber evidence="1">1.18.1.-</ecNumber>
    </recommendedName>
    <alternativeName>
        <fullName evidence="1">Flavorubredoxin reductase</fullName>
        <shortName evidence="1">FlRd-reductase</shortName>
        <shortName evidence="1">FlavoRb reductase</shortName>
    </alternativeName>
</protein>
<reference key="1">
    <citation type="submission" date="2007-11" db="EMBL/GenBank/DDBJ databases">
        <authorList>
            <consortium name="The Salmonella enterica serovar Arizonae Genome Sequencing Project"/>
            <person name="McClelland M."/>
            <person name="Sanderson E.K."/>
            <person name="Porwollik S."/>
            <person name="Spieth J."/>
            <person name="Clifton W.S."/>
            <person name="Fulton R."/>
            <person name="Chunyan W."/>
            <person name="Wollam A."/>
            <person name="Shah N."/>
            <person name="Pepin K."/>
            <person name="Bhonagiri V."/>
            <person name="Nash W."/>
            <person name="Johnson M."/>
            <person name="Thiruvilangam P."/>
            <person name="Wilson R."/>
        </authorList>
    </citation>
    <scope>NUCLEOTIDE SEQUENCE [LARGE SCALE GENOMIC DNA]</scope>
    <source>
        <strain>ATCC BAA-731 / CDC346-86 / RSK2980</strain>
    </source>
</reference>
<name>NORW_SALAR</name>
<dbReference type="EC" id="1.18.1.-" evidence="1"/>
<dbReference type="EMBL" id="CP000880">
    <property type="protein sequence ID" value="ABX20083.1"/>
    <property type="molecule type" value="Genomic_DNA"/>
</dbReference>
<dbReference type="SMR" id="A9MFX5"/>
<dbReference type="STRING" id="41514.SARI_00130"/>
<dbReference type="KEGG" id="ses:SARI_00130"/>
<dbReference type="HOGENOM" id="CLU_003291_4_4_6"/>
<dbReference type="UniPathway" id="UPA00638"/>
<dbReference type="Proteomes" id="UP000002084">
    <property type="component" value="Chromosome"/>
</dbReference>
<dbReference type="GO" id="GO:0005737">
    <property type="term" value="C:cytoplasm"/>
    <property type="evidence" value="ECO:0007669"/>
    <property type="project" value="UniProtKB-SubCell"/>
</dbReference>
<dbReference type="GO" id="GO:0016731">
    <property type="term" value="F:oxidoreductase activity, acting on iron-sulfur proteins as donors, NAD or NADP as acceptor"/>
    <property type="evidence" value="ECO:0007669"/>
    <property type="project" value="UniProtKB-UniRule"/>
</dbReference>
<dbReference type="Gene3D" id="3.30.390.120">
    <property type="match status" value="1"/>
</dbReference>
<dbReference type="Gene3D" id="3.50.50.60">
    <property type="entry name" value="FAD/NAD(P)-binding domain"/>
    <property type="match status" value="2"/>
</dbReference>
<dbReference type="HAMAP" id="MF_01313">
    <property type="entry name" value="NorW"/>
    <property type="match status" value="1"/>
</dbReference>
<dbReference type="InterPro" id="IPR050260">
    <property type="entry name" value="FAD-bd_OxRdtase"/>
</dbReference>
<dbReference type="InterPro" id="IPR036188">
    <property type="entry name" value="FAD/NAD-bd_sf"/>
</dbReference>
<dbReference type="InterPro" id="IPR023753">
    <property type="entry name" value="FAD/NAD-binding_dom"/>
</dbReference>
<dbReference type="InterPro" id="IPR023961">
    <property type="entry name" value="NO_rdtase_NorW"/>
</dbReference>
<dbReference type="InterPro" id="IPR041364">
    <property type="entry name" value="Rbx-bd"/>
</dbReference>
<dbReference type="NCBIfam" id="NF003437">
    <property type="entry name" value="PRK04965.1"/>
    <property type="match status" value="1"/>
</dbReference>
<dbReference type="PANTHER" id="PTHR43429:SF3">
    <property type="entry name" value="NITRITE REDUCTASE [NAD(P)H]"/>
    <property type="match status" value="1"/>
</dbReference>
<dbReference type="PANTHER" id="PTHR43429">
    <property type="entry name" value="PYRIDINE NUCLEOTIDE-DISULFIDE OXIDOREDUCTASE DOMAIN-CONTAINING"/>
    <property type="match status" value="1"/>
</dbReference>
<dbReference type="Pfam" id="PF07992">
    <property type="entry name" value="Pyr_redox_2"/>
    <property type="match status" value="1"/>
</dbReference>
<dbReference type="Pfam" id="PF18113">
    <property type="entry name" value="Rbx_binding"/>
    <property type="match status" value="1"/>
</dbReference>
<dbReference type="PRINTS" id="PR00368">
    <property type="entry name" value="FADPNR"/>
</dbReference>
<dbReference type="PRINTS" id="PR00411">
    <property type="entry name" value="PNDRDTASEI"/>
</dbReference>
<dbReference type="SUPFAM" id="SSF51905">
    <property type="entry name" value="FAD/NAD(P)-binding domain"/>
    <property type="match status" value="1"/>
</dbReference>
<gene>
    <name evidence="1" type="primary">norW</name>
    <name evidence="1" type="synonym">flrR</name>
    <name type="ordered locus">SARI_00130</name>
</gene>
<sequence length="377" mass="41184">MSRGIIIIGSGFAARQLVKNIRKQDAHVPLTLIAADSMDEYNKPDLSHVISQSQRADDLTRQLAGEFAEQFNLRLFPHTWVADIDADAHVVKSQDKQWQYDKLVLATGAAAFVPPVAGRELMLTLNSQQEYRACETQLRAAQRVLIVGGGLIGSELAMDFCRAGKTVTLMDNAASLLASLMPPEVSSRLQHRLTDMGVHLQLKSQLQELEKSEAGIRATLASQRRIEVDAAIAATGLRPETALARRAGLVINHGVCVDSYLQTSHPDIYAIGDCAEINGQVLPFLQPIQLSAMYLAKNLLGGKAPLKLPAMLVKVKTPELPLYLAGETQRRDLSWHITAESDGMIAKGMSGEGQLRAFVASEDRMKEAFALLKMLPV</sequence>
<accession>A9MFX5</accession>
<evidence type="ECO:0000255" key="1">
    <source>
        <dbReference type="HAMAP-Rule" id="MF_01313"/>
    </source>
</evidence>
<proteinExistence type="inferred from homology"/>
<keyword id="KW-0963">Cytoplasm</keyword>
<keyword id="KW-0274">FAD</keyword>
<keyword id="KW-0285">Flavoprotein</keyword>
<keyword id="KW-0520">NAD</keyword>
<keyword id="KW-0560">Oxidoreductase</keyword>
<keyword id="KW-1185">Reference proteome</keyword>
<organism>
    <name type="scientific">Salmonella arizonae (strain ATCC BAA-731 / CDC346-86 / RSK2980)</name>
    <dbReference type="NCBI Taxonomy" id="41514"/>
    <lineage>
        <taxon>Bacteria</taxon>
        <taxon>Pseudomonadati</taxon>
        <taxon>Pseudomonadota</taxon>
        <taxon>Gammaproteobacteria</taxon>
        <taxon>Enterobacterales</taxon>
        <taxon>Enterobacteriaceae</taxon>
        <taxon>Salmonella</taxon>
    </lineage>
</organism>
<comment type="function">
    <text evidence="1">One of at least two accessory proteins for anaerobic nitric oxide (NO) reductase. Reduces the rubredoxin moiety of NO reductase.</text>
</comment>
<comment type="catalytic activity">
    <reaction evidence="1">
        <text>2 reduced [nitric oxide reductase rubredoxin domain] + NAD(+) + H(+) = 2 oxidized [nitric oxide reductase rubredoxin domain] + NADH</text>
        <dbReference type="Rhea" id="RHEA:42960"/>
        <dbReference type="Rhea" id="RHEA-COMP:10304"/>
        <dbReference type="Rhea" id="RHEA-COMP:10305"/>
        <dbReference type="ChEBI" id="CHEBI:15378"/>
        <dbReference type="ChEBI" id="CHEBI:29033"/>
        <dbReference type="ChEBI" id="CHEBI:29034"/>
        <dbReference type="ChEBI" id="CHEBI:57540"/>
        <dbReference type="ChEBI" id="CHEBI:57945"/>
    </reaction>
</comment>
<comment type="cofactor">
    <cofactor evidence="1">
        <name>FAD</name>
        <dbReference type="ChEBI" id="CHEBI:57692"/>
    </cofactor>
</comment>
<comment type="pathway">
    <text evidence="1">Nitrogen metabolism; nitric oxide reduction.</text>
</comment>
<comment type="subcellular location">
    <subcellularLocation>
        <location evidence="1">Cytoplasm</location>
    </subcellularLocation>
</comment>
<comment type="similarity">
    <text evidence="1">Belongs to the FAD-dependent oxidoreductase family.</text>
</comment>